<dbReference type="EMBL" id="AE008922">
    <property type="protein sequence ID" value="AAM40859.1"/>
    <property type="molecule type" value="Genomic_DNA"/>
</dbReference>
<dbReference type="RefSeq" id="NP_636935.1">
    <property type="nucleotide sequence ID" value="NC_003902.1"/>
</dbReference>
<dbReference type="RefSeq" id="WP_005991243.1">
    <property type="nucleotide sequence ID" value="NC_003902.1"/>
</dbReference>
<dbReference type="SMR" id="Q8PAC1"/>
<dbReference type="STRING" id="190485.XCC1564"/>
<dbReference type="EnsemblBacteria" id="AAM40859">
    <property type="protein sequence ID" value="AAM40859"/>
    <property type="gene ID" value="XCC1564"/>
</dbReference>
<dbReference type="GeneID" id="97211160"/>
<dbReference type="KEGG" id="xcc:XCC1564"/>
<dbReference type="PATRIC" id="fig|190485.4.peg.1677"/>
<dbReference type="eggNOG" id="COG0238">
    <property type="taxonomic scope" value="Bacteria"/>
</dbReference>
<dbReference type="HOGENOM" id="CLU_148710_2_3_6"/>
<dbReference type="OrthoDB" id="9812008at2"/>
<dbReference type="PRO" id="PR:Q8PAC1"/>
<dbReference type="Proteomes" id="UP000001010">
    <property type="component" value="Chromosome"/>
</dbReference>
<dbReference type="GO" id="GO:0022627">
    <property type="term" value="C:cytosolic small ribosomal subunit"/>
    <property type="evidence" value="ECO:0000318"/>
    <property type="project" value="GO_Central"/>
</dbReference>
<dbReference type="GO" id="GO:0070181">
    <property type="term" value="F:small ribosomal subunit rRNA binding"/>
    <property type="evidence" value="ECO:0000318"/>
    <property type="project" value="GO_Central"/>
</dbReference>
<dbReference type="GO" id="GO:0003735">
    <property type="term" value="F:structural constituent of ribosome"/>
    <property type="evidence" value="ECO:0000318"/>
    <property type="project" value="GO_Central"/>
</dbReference>
<dbReference type="GO" id="GO:0006412">
    <property type="term" value="P:translation"/>
    <property type="evidence" value="ECO:0000318"/>
    <property type="project" value="GO_Central"/>
</dbReference>
<dbReference type="FunFam" id="4.10.640.10:FF:000001">
    <property type="entry name" value="30S ribosomal protein S18"/>
    <property type="match status" value="1"/>
</dbReference>
<dbReference type="Gene3D" id="4.10.640.10">
    <property type="entry name" value="Ribosomal protein S18"/>
    <property type="match status" value="1"/>
</dbReference>
<dbReference type="HAMAP" id="MF_00270">
    <property type="entry name" value="Ribosomal_bS18"/>
    <property type="match status" value="1"/>
</dbReference>
<dbReference type="InterPro" id="IPR001648">
    <property type="entry name" value="Ribosomal_bS18"/>
</dbReference>
<dbReference type="InterPro" id="IPR018275">
    <property type="entry name" value="Ribosomal_bS18_CS"/>
</dbReference>
<dbReference type="InterPro" id="IPR036870">
    <property type="entry name" value="Ribosomal_bS18_sf"/>
</dbReference>
<dbReference type="NCBIfam" id="TIGR00165">
    <property type="entry name" value="S18"/>
    <property type="match status" value="1"/>
</dbReference>
<dbReference type="PANTHER" id="PTHR13479">
    <property type="entry name" value="30S RIBOSOMAL PROTEIN S18"/>
    <property type="match status" value="1"/>
</dbReference>
<dbReference type="PANTHER" id="PTHR13479:SF40">
    <property type="entry name" value="SMALL RIBOSOMAL SUBUNIT PROTEIN BS18M"/>
    <property type="match status" value="1"/>
</dbReference>
<dbReference type="Pfam" id="PF01084">
    <property type="entry name" value="Ribosomal_S18"/>
    <property type="match status" value="1"/>
</dbReference>
<dbReference type="PRINTS" id="PR00974">
    <property type="entry name" value="RIBOSOMALS18"/>
</dbReference>
<dbReference type="SUPFAM" id="SSF46911">
    <property type="entry name" value="Ribosomal protein S18"/>
    <property type="match status" value="1"/>
</dbReference>
<dbReference type="PROSITE" id="PS00057">
    <property type="entry name" value="RIBOSOMAL_S18"/>
    <property type="match status" value="1"/>
</dbReference>
<evidence type="ECO:0000255" key="1">
    <source>
        <dbReference type="HAMAP-Rule" id="MF_00270"/>
    </source>
</evidence>
<evidence type="ECO:0000305" key="2"/>
<keyword id="KW-1185">Reference proteome</keyword>
<keyword id="KW-0687">Ribonucleoprotein</keyword>
<keyword id="KW-0689">Ribosomal protein</keyword>
<keyword id="KW-0694">RNA-binding</keyword>
<keyword id="KW-0699">rRNA-binding</keyword>
<proteinExistence type="inferred from homology"/>
<feature type="chain" id="PRO_0000111266" description="Small ribosomal subunit protein bS18">
    <location>
        <begin position="1"/>
        <end position="76"/>
    </location>
</feature>
<name>RS18_XANCP</name>
<organism>
    <name type="scientific">Xanthomonas campestris pv. campestris (strain ATCC 33913 / DSM 3586 / NCPPB 528 / LMG 568 / P 25)</name>
    <dbReference type="NCBI Taxonomy" id="190485"/>
    <lineage>
        <taxon>Bacteria</taxon>
        <taxon>Pseudomonadati</taxon>
        <taxon>Pseudomonadota</taxon>
        <taxon>Gammaproteobacteria</taxon>
        <taxon>Lysobacterales</taxon>
        <taxon>Lysobacteraceae</taxon>
        <taxon>Xanthomonas</taxon>
    </lineage>
</organism>
<protein>
    <recommendedName>
        <fullName evidence="1">Small ribosomal subunit protein bS18</fullName>
    </recommendedName>
    <alternativeName>
        <fullName evidence="2">30S ribosomal protein S18</fullName>
    </alternativeName>
</protein>
<sequence>MSKFFRRRKFCKFTAEGVKEIDYKDLNTLRQYLTENGKIVPSRVTGTKSKYQRQLATAVKRSRFLALIPYTDNHDV</sequence>
<reference key="1">
    <citation type="journal article" date="2002" name="Nature">
        <title>Comparison of the genomes of two Xanthomonas pathogens with differing host specificities.</title>
        <authorList>
            <person name="da Silva A.C.R."/>
            <person name="Ferro J.A."/>
            <person name="Reinach F.C."/>
            <person name="Farah C.S."/>
            <person name="Furlan L.R."/>
            <person name="Quaggio R.B."/>
            <person name="Monteiro-Vitorello C.B."/>
            <person name="Van Sluys M.A."/>
            <person name="Almeida N.F. Jr."/>
            <person name="Alves L.M.C."/>
            <person name="do Amaral A.M."/>
            <person name="Bertolini M.C."/>
            <person name="Camargo L.E.A."/>
            <person name="Camarotte G."/>
            <person name="Cannavan F."/>
            <person name="Cardozo J."/>
            <person name="Chambergo F."/>
            <person name="Ciapina L.P."/>
            <person name="Cicarelli R.M.B."/>
            <person name="Coutinho L.L."/>
            <person name="Cursino-Santos J.R."/>
            <person name="El-Dorry H."/>
            <person name="Faria J.B."/>
            <person name="Ferreira A.J.S."/>
            <person name="Ferreira R.C.C."/>
            <person name="Ferro M.I.T."/>
            <person name="Formighieri E.F."/>
            <person name="Franco M.C."/>
            <person name="Greggio C.C."/>
            <person name="Gruber A."/>
            <person name="Katsuyama A.M."/>
            <person name="Kishi L.T."/>
            <person name="Leite R.P."/>
            <person name="Lemos E.G.M."/>
            <person name="Lemos M.V.F."/>
            <person name="Locali E.C."/>
            <person name="Machado M.A."/>
            <person name="Madeira A.M.B.N."/>
            <person name="Martinez-Rossi N.M."/>
            <person name="Martins E.C."/>
            <person name="Meidanis J."/>
            <person name="Menck C.F.M."/>
            <person name="Miyaki C.Y."/>
            <person name="Moon D.H."/>
            <person name="Moreira L.M."/>
            <person name="Novo M.T.M."/>
            <person name="Okura V.K."/>
            <person name="Oliveira M.C."/>
            <person name="Oliveira V.R."/>
            <person name="Pereira H.A."/>
            <person name="Rossi A."/>
            <person name="Sena J.A.D."/>
            <person name="Silva C."/>
            <person name="de Souza R.F."/>
            <person name="Spinola L.A.F."/>
            <person name="Takita M.A."/>
            <person name="Tamura R.E."/>
            <person name="Teixeira E.C."/>
            <person name="Tezza R.I.D."/>
            <person name="Trindade dos Santos M."/>
            <person name="Truffi D."/>
            <person name="Tsai S.M."/>
            <person name="White F.F."/>
            <person name="Setubal J.C."/>
            <person name="Kitajima J.P."/>
        </authorList>
    </citation>
    <scope>NUCLEOTIDE SEQUENCE [LARGE SCALE GENOMIC DNA]</scope>
    <source>
        <strain>ATCC 33913 / DSM 3586 / NCPPB 528 / LMG 568 / P 25</strain>
    </source>
</reference>
<accession>Q8PAC1</accession>
<comment type="function">
    <text evidence="1">Binds as a heterodimer with protein bS6 to the central domain of the 16S rRNA, where it helps stabilize the platform of the 30S subunit.</text>
</comment>
<comment type="subunit">
    <text evidence="1">Part of the 30S ribosomal subunit. Forms a tight heterodimer with protein bS6.</text>
</comment>
<comment type="similarity">
    <text evidence="1">Belongs to the bacterial ribosomal protein bS18 family.</text>
</comment>
<gene>
    <name evidence="1" type="primary">rpsR</name>
    <name type="ordered locus">XCC1564</name>
</gene>